<reference key="1">
    <citation type="journal article" date="2008" name="Environ. Microbiol.">
        <title>The genome of Erwinia tasmaniensis strain Et1/99, a non-pathogenic bacterium in the genus Erwinia.</title>
        <authorList>
            <person name="Kube M."/>
            <person name="Migdoll A.M."/>
            <person name="Mueller I."/>
            <person name="Kuhl H."/>
            <person name="Beck A."/>
            <person name="Reinhardt R."/>
            <person name="Geider K."/>
        </authorList>
    </citation>
    <scope>NUCLEOTIDE SEQUENCE [LARGE SCALE GENOMIC DNA]</scope>
    <source>
        <strain>DSM 17950 / CFBP 7177 / CIP 109463 / NCPPB 4357 / Et1/99</strain>
    </source>
</reference>
<dbReference type="EC" id="3.2.2.9" evidence="1"/>
<dbReference type="EMBL" id="CU468135">
    <property type="protein sequence ID" value="CAO95928.1"/>
    <property type="molecule type" value="Genomic_DNA"/>
</dbReference>
<dbReference type="RefSeq" id="WP_012440630.1">
    <property type="nucleotide sequence ID" value="NC_010694.1"/>
</dbReference>
<dbReference type="SMR" id="B2VE28"/>
<dbReference type="STRING" id="465817.ETA_08820"/>
<dbReference type="KEGG" id="eta:ETA_08820"/>
<dbReference type="eggNOG" id="COG0775">
    <property type="taxonomic scope" value="Bacteria"/>
</dbReference>
<dbReference type="HOGENOM" id="CLU_031248_2_2_6"/>
<dbReference type="OrthoDB" id="9792278at2"/>
<dbReference type="UniPathway" id="UPA00904">
    <property type="reaction ID" value="UER00871"/>
</dbReference>
<dbReference type="Proteomes" id="UP000001726">
    <property type="component" value="Chromosome"/>
</dbReference>
<dbReference type="GO" id="GO:0005829">
    <property type="term" value="C:cytosol"/>
    <property type="evidence" value="ECO:0007669"/>
    <property type="project" value="TreeGrafter"/>
</dbReference>
<dbReference type="GO" id="GO:0008782">
    <property type="term" value="F:adenosylhomocysteine nucleosidase activity"/>
    <property type="evidence" value="ECO:0007669"/>
    <property type="project" value="UniProtKB-UniRule"/>
</dbReference>
<dbReference type="GO" id="GO:0008930">
    <property type="term" value="F:methylthioadenosine nucleosidase activity"/>
    <property type="evidence" value="ECO:0007669"/>
    <property type="project" value="UniProtKB-UniRule"/>
</dbReference>
<dbReference type="GO" id="GO:0019509">
    <property type="term" value="P:L-methionine salvage from methylthioadenosine"/>
    <property type="evidence" value="ECO:0007669"/>
    <property type="project" value="UniProtKB-UniRule"/>
</dbReference>
<dbReference type="GO" id="GO:0019284">
    <property type="term" value="P:L-methionine salvage from S-adenosylmethionine"/>
    <property type="evidence" value="ECO:0007669"/>
    <property type="project" value="TreeGrafter"/>
</dbReference>
<dbReference type="GO" id="GO:0046124">
    <property type="term" value="P:purine deoxyribonucleoside catabolic process"/>
    <property type="evidence" value="ECO:0007669"/>
    <property type="project" value="UniProtKB-UniRule"/>
</dbReference>
<dbReference type="CDD" id="cd09008">
    <property type="entry name" value="MTAN"/>
    <property type="match status" value="1"/>
</dbReference>
<dbReference type="FunFam" id="3.40.50.1580:FF:000001">
    <property type="entry name" value="MTA/SAH nucleosidase family protein"/>
    <property type="match status" value="1"/>
</dbReference>
<dbReference type="Gene3D" id="3.40.50.1580">
    <property type="entry name" value="Nucleoside phosphorylase domain"/>
    <property type="match status" value="1"/>
</dbReference>
<dbReference type="HAMAP" id="MF_01684">
    <property type="entry name" value="Salvage_MtnN"/>
    <property type="match status" value="1"/>
</dbReference>
<dbReference type="InterPro" id="IPR010049">
    <property type="entry name" value="MTA_SAH_Nsdase"/>
</dbReference>
<dbReference type="InterPro" id="IPR000845">
    <property type="entry name" value="Nucleoside_phosphorylase_d"/>
</dbReference>
<dbReference type="InterPro" id="IPR035994">
    <property type="entry name" value="Nucleoside_phosphorylase_sf"/>
</dbReference>
<dbReference type="NCBIfam" id="TIGR01704">
    <property type="entry name" value="MTA_SAH-Nsdase"/>
    <property type="match status" value="1"/>
</dbReference>
<dbReference type="NCBIfam" id="NF004079">
    <property type="entry name" value="PRK05584.1"/>
    <property type="match status" value="1"/>
</dbReference>
<dbReference type="PANTHER" id="PTHR46832">
    <property type="entry name" value="5'-METHYLTHIOADENOSINE/S-ADENOSYLHOMOCYSTEINE NUCLEOSIDASE"/>
    <property type="match status" value="1"/>
</dbReference>
<dbReference type="PANTHER" id="PTHR46832:SF1">
    <property type="entry name" value="5'-METHYLTHIOADENOSINE_S-ADENOSYLHOMOCYSTEINE NUCLEOSIDASE"/>
    <property type="match status" value="1"/>
</dbReference>
<dbReference type="Pfam" id="PF01048">
    <property type="entry name" value="PNP_UDP_1"/>
    <property type="match status" value="1"/>
</dbReference>
<dbReference type="SUPFAM" id="SSF53167">
    <property type="entry name" value="Purine and uridine phosphorylases"/>
    <property type="match status" value="1"/>
</dbReference>
<evidence type="ECO:0000255" key="1">
    <source>
        <dbReference type="HAMAP-Rule" id="MF_01684"/>
    </source>
</evidence>
<name>MTNN_ERWT9</name>
<keyword id="KW-0028">Amino-acid biosynthesis</keyword>
<keyword id="KW-0378">Hydrolase</keyword>
<keyword id="KW-0486">Methionine biosynthesis</keyword>
<keyword id="KW-1185">Reference proteome</keyword>
<comment type="function">
    <text evidence="1">Catalyzes the irreversible cleavage of the glycosidic bond in both 5'-methylthioadenosine (MTA) and S-adenosylhomocysteine (SAH/AdoHcy) to adenine and the corresponding thioribose, 5'-methylthioribose and S-ribosylhomocysteine, respectively. Also cleaves 5'-deoxyadenosine, a toxic by-product of radical S-adenosylmethionine (SAM) enzymes, into 5-deoxyribose and adenine. Thus, is required for in vivo function of the radical SAM enzymes biotin synthase and lipoic acid synthase, that are inhibited by 5'-deoxyadenosine accumulation.</text>
</comment>
<comment type="catalytic activity">
    <reaction evidence="1">
        <text>S-adenosyl-L-homocysteine + H2O = S-(5-deoxy-D-ribos-5-yl)-L-homocysteine + adenine</text>
        <dbReference type="Rhea" id="RHEA:17805"/>
        <dbReference type="ChEBI" id="CHEBI:15377"/>
        <dbReference type="ChEBI" id="CHEBI:16708"/>
        <dbReference type="ChEBI" id="CHEBI:57856"/>
        <dbReference type="ChEBI" id="CHEBI:58195"/>
        <dbReference type="EC" id="3.2.2.9"/>
    </reaction>
</comment>
<comment type="catalytic activity">
    <reaction evidence="1">
        <text>S-methyl-5'-thioadenosine + H2O = 5-(methylsulfanyl)-D-ribose + adenine</text>
        <dbReference type="Rhea" id="RHEA:13617"/>
        <dbReference type="ChEBI" id="CHEBI:15377"/>
        <dbReference type="ChEBI" id="CHEBI:16708"/>
        <dbReference type="ChEBI" id="CHEBI:17509"/>
        <dbReference type="ChEBI" id="CHEBI:78440"/>
        <dbReference type="EC" id="3.2.2.9"/>
    </reaction>
</comment>
<comment type="catalytic activity">
    <reaction evidence="1">
        <text>5'-deoxyadenosine + H2O = 5-deoxy-D-ribose + adenine</text>
        <dbReference type="Rhea" id="RHEA:29859"/>
        <dbReference type="ChEBI" id="CHEBI:15377"/>
        <dbReference type="ChEBI" id="CHEBI:16708"/>
        <dbReference type="ChEBI" id="CHEBI:17319"/>
        <dbReference type="ChEBI" id="CHEBI:149540"/>
        <dbReference type="EC" id="3.2.2.9"/>
    </reaction>
    <physiologicalReaction direction="left-to-right" evidence="1">
        <dbReference type="Rhea" id="RHEA:29860"/>
    </physiologicalReaction>
</comment>
<comment type="pathway">
    <text evidence="1">Amino-acid biosynthesis; L-methionine biosynthesis via salvage pathway; S-methyl-5-thio-alpha-D-ribose 1-phosphate from S-methyl-5'-thioadenosine (hydrolase route): step 1/2.</text>
</comment>
<comment type="subunit">
    <text evidence="1">Homodimer.</text>
</comment>
<comment type="similarity">
    <text evidence="1">Belongs to the PNP/UDP phosphorylase family. MtnN subfamily.</text>
</comment>
<feature type="chain" id="PRO_0000359292" description="5'-methylthioadenosine/S-adenosylhomocysteine nucleosidase">
    <location>
        <begin position="1"/>
        <end position="232"/>
    </location>
</feature>
<feature type="active site" description="Proton acceptor" evidence="1">
    <location>
        <position position="12"/>
    </location>
</feature>
<feature type="active site" description="Proton donor" evidence="1">
    <location>
        <position position="197"/>
    </location>
</feature>
<feature type="binding site" evidence="1">
    <location>
        <position position="78"/>
    </location>
    <ligand>
        <name>substrate</name>
    </ligand>
</feature>
<feature type="binding site" evidence="1">
    <location>
        <position position="152"/>
    </location>
    <ligand>
        <name>substrate</name>
    </ligand>
</feature>
<feature type="binding site" evidence="1">
    <location>
        <begin position="173"/>
        <end position="174"/>
    </location>
    <ligand>
        <name>substrate</name>
    </ligand>
</feature>
<sequence length="232" mass="24318">MKAGIIGAMEQEVTLLRDKIENRQTLTLAGCEIYTGTLNGVDVALLKSGIGKVSAALGTTLLLELCKPDVVINTGSAGGLAATLKVGDIVVSDEVRYHDADVTAFGYEAGQMAGCPAAFKADEKLITAVEQCIHQLDLHAVRGLVVSGDAFINGAAPLAHIRNTFPQAIAVEMEATAIGHVCHQFGTPFVVVRAISDVADQQSHLSFDEFLAVAAKQSSLLVEKLLAHLAQG</sequence>
<organism>
    <name type="scientific">Erwinia tasmaniensis (strain DSM 17950 / CFBP 7177 / CIP 109463 / NCPPB 4357 / Et1/99)</name>
    <dbReference type="NCBI Taxonomy" id="465817"/>
    <lineage>
        <taxon>Bacteria</taxon>
        <taxon>Pseudomonadati</taxon>
        <taxon>Pseudomonadota</taxon>
        <taxon>Gammaproteobacteria</taxon>
        <taxon>Enterobacterales</taxon>
        <taxon>Erwiniaceae</taxon>
        <taxon>Erwinia</taxon>
    </lineage>
</organism>
<accession>B2VE28</accession>
<protein>
    <recommendedName>
        <fullName evidence="1">5'-methylthioadenosine/S-adenosylhomocysteine nucleosidase</fullName>
        <shortName evidence="1">MTA/SAH nucleosidase</shortName>
        <shortName evidence="1">MTAN</shortName>
        <ecNumber evidence="1">3.2.2.9</ecNumber>
    </recommendedName>
    <alternativeName>
        <fullName evidence="1">5'-deoxyadenosine nucleosidase</fullName>
        <shortName evidence="1">DOA nucleosidase</shortName>
        <shortName evidence="1">dAdo nucleosidase</shortName>
    </alternativeName>
    <alternativeName>
        <fullName evidence="1">5'-methylthioadenosine nucleosidase</fullName>
        <shortName evidence="1">MTA nucleosidase</shortName>
    </alternativeName>
    <alternativeName>
        <fullName evidence="1">S-adenosylhomocysteine nucleosidase</fullName>
        <shortName evidence="1">AdoHcy nucleosidase</shortName>
        <shortName evidence="1">SAH nucleosidase</shortName>
        <shortName evidence="1">SRH nucleosidase</shortName>
    </alternativeName>
</protein>
<gene>
    <name evidence="1" type="primary">mtnN</name>
    <name type="ordered locus">ETA_08820</name>
</gene>
<proteinExistence type="inferred from homology"/>